<keyword id="KW-0150">Chloroplast</keyword>
<keyword id="KW-0456">Lyase</keyword>
<keyword id="KW-0460">Magnesium</keyword>
<keyword id="KW-0479">Metal-binding</keyword>
<keyword id="KW-0934">Plastid</keyword>
<keyword id="KW-0809">Transit peptide</keyword>
<organism>
    <name type="scientific">Cannabis sativa</name>
    <name type="common">Hemp</name>
    <name type="synonym">Marijuana</name>
    <dbReference type="NCBI Taxonomy" id="3483"/>
    <lineage>
        <taxon>Eukaryota</taxon>
        <taxon>Viridiplantae</taxon>
        <taxon>Streptophyta</taxon>
        <taxon>Embryophyta</taxon>
        <taxon>Tracheophyta</taxon>
        <taxon>Spermatophyta</taxon>
        <taxon>Magnoliopsida</taxon>
        <taxon>eudicotyledons</taxon>
        <taxon>Gunneridae</taxon>
        <taxon>Pentapetalae</taxon>
        <taxon>rosids</taxon>
        <taxon>fabids</taxon>
        <taxon>Rosales</taxon>
        <taxon>Cannabaceae</taxon>
        <taxon>Cannabis</taxon>
    </lineage>
</organism>
<comment type="function">
    <text evidence="4">Involved in monoterpene (C10) olefins biosynthesis, constituants of cannabinoids and terpenoids-rich resins (PubMed:31138625). Catalyzes strictly the conversion of (2E)-geranyl diphosphate to beta-myrcene (PubMed:31138625).</text>
</comment>
<comment type="catalytic activity">
    <reaction evidence="4">
        <text>(2E)-geranyl diphosphate = beta-myrcene + diphosphate</text>
        <dbReference type="Rhea" id="RHEA:16965"/>
        <dbReference type="ChEBI" id="CHEBI:17221"/>
        <dbReference type="ChEBI" id="CHEBI:33019"/>
        <dbReference type="ChEBI" id="CHEBI:58057"/>
        <dbReference type="EC" id="4.2.3.15"/>
    </reaction>
    <physiologicalReaction direction="left-to-right" evidence="4">
        <dbReference type="Rhea" id="RHEA:16966"/>
    </physiologicalReaction>
</comment>
<comment type="cofactor">
    <cofactor evidence="1">
        <name>Mg(2+)</name>
        <dbReference type="ChEBI" id="CHEBI:18420"/>
    </cofactor>
    <cofactor evidence="1">
        <name>Mn(2+)</name>
        <dbReference type="ChEBI" id="CHEBI:29035"/>
    </cofactor>
    <text evidence="1">Binds 3 Mg(2+) or Mn(2+) ions per subunit.</text>
</comment>
<comment type="pathway">
    <text evidence="4">Secondary metabolite biosynthesis; terpenoid biosynthesis.</text>
</comment>
<comment type="subcellular location">
    <subcellularLocation>
        <location evidence="3">Plastid</location>
        <location evidence="3">Chloroplast</location>
    </subcellularLocation>
</comment>
<comment type="domain">
    <text evidence="2">The Asp-Asp-Xaa-Xaa-Asp/Glu (DDXXD/E) motif is important for the catalytic activity, presumably through binding to Mg(2+).</text>
</comment>
<comment type="similarity">
    <text evidence="6">Belongs to the terpene synthase family. Tpsb subfamily.</text>
</comment>
<name>T15CT_CANSA</name>
<gene>
    <name evidence="5" type="primary">TPS15CT</name>
</gene>
<protein>
    <recommendedName>
        <fullName evidence="5">Beta-myrcene synthase TPS15CT</fullName>
        <ecNumber evidence="4">4.2.3.15</ecNumber>
    </recommendedName>
    <alternativeName>
        <fullName evidence="5">Terpene synthase 15 CT</fullName>
        <shortName evidence="5">CsTPS15CT</shortName>
    </alternativeName>
</protein>
<proteinExistence type="evidence at protein level"/>
<reference key="1">
    <citation type="journal article" date="2019" name="Plant Physiol.">
        <title>Gene networks underlying cannabinoid and terpenoid accumulation in cannabis.</title>
        <authorList>
            <person name="Zager J.J."/>
            <person name="Lange I."/>
            <person name="Srividya N."/>
            <person name="Smith A."/>
            <person name="Lange B.M."/>
        </authorList>
    </citation>
    <scope>NUCLEOTIDE SEQUENCE [MRNA]</scope>
    <scope>FUNCTION</scope>
    <scope>CATALYTIC ACTIVITY</scope>
    <scope>PATHWAY</scope>
    <source>
        <strain>cv. Black Lime</strain>
        <strain>cv. Blackberry Kush</strain>
        <strain>cv. Canna Tsu</strain>
        <strain>cv. Cherry Chem</strain>
        <strain>cv. Mama Thai</strain>
        <strain>cv. Sour Diesel</strain>
        <strain>cv. Terple</strain>
        <strain>cv. Valley Fire</strain>
        <strain>cv. White Cookies</strain>
        <tissue>Trichome gland</tissue>
    </source>
</reference>
<accession>A0A4Y5QWK5</accession>
<feature type="transit peptide" description="Chloroplast" evidence="3">
    <location>
        <begin position="1"/>
        <end position="55"/>
    </location>
</feature>
<feature type="chain" id="PRO_0000460897" description="Beta-myrcene synthase TPS15CT">
    <location>
        <begin position="56"/>
        <end position="633"/>
    </location>
</feature>
<feature type="short sequence motif" description="DDXXD motif" evidence="2">
    <location>
        <begin position="381"/>
        <end position="385"/>
    </location>
</feature>
<feature type="binding site" evidence="2">
    <location>
        <position position="344"/>
    </location>
    <ligand>
        <name>(2E)-geranyl diphosphate</name>
        <dbReference type="ChEBI" id="CHEBI:58057"/>
    </ligand>
</feature>
<feature type="binding site" evidence="2">
    <location>
        <position position="381"/>
    </location>
    <ligand>
        <name>(2E)-geranyl diphosphate</name>
        <dbReference type="ChEBI" id="CHEBI:58057"/>
    </ligand>
</feature>
<feature type="binding site" evidence="2">
    <location>
        <position position="381"/>
    </location>
    <ligand>
        <name>Mg(2+)</name>
        <dbReference type="ChEBI" id="CHEBI:18420"/>
        <label>1</label>
    </ligand>
</feature>
<feature type="binding site" evidence="2">
    <location>
        <position position="381"/>
    </location>
    <ligand>
        <name>Mg(2+)</name>
        <dbReference type="ChEBI" id="CHEBI:18420"/>
        <label>2</label>
    </ligand>
</feature>
<feature type="binding site" evidence="2">
    <location>
        <position position="385"/>
    </location>
    <ligand>
        <name>(2E)-geranyl diphosphate</name>
        <dbReference type="ChEBI" id="CHEBI:58057"/>
    </ligand>
</feature>
<feature type="binding site" evidence="2">
    <location>
        <position position="385"/>
    </location>
    <ligand>
        <name>Mg(2+)</name>
        <dbReference type="ChEBI" id="CHEBI:18420"/>
        <label>1</label>
    </ligand>
</feature>
<feature type="binding site" evidence="2">
    <location>
        <position position="385"/>
    </location>
    <ligand>
        <name>Mg(2+)</name>
        <dbReference type="ChEBI" id="CHEBI:18420"/>
        <label>2</label>
    </ligand>
</feature>
<feature type="binding site" evidence="2">
    <location>
        <position position="525"/>
    </location>
    <ligand>
        <name>(2E)-geranyl diphosphate</name>
        <dbReference type="ChEBI" id="CHEBI:58057"/>
    </ligand>
</feature>
<feature type="binding site" evidence="2">
    <location>
        <position position="528"/>
    </location>
    <ligand>
        <name>(2E)-geranyl diphosphate</name>
        <dbReference type="ChEBI" id="CHEBI:58057"/>
    </ligand>
</feature>
<feature type="binding site" evidence="2">
    <location>
        <position position="528"/>
    </location>
    <ligand>
        <name>Mg(2+)</name>
        <dbReference type="ChEBI" id="CHEBI:18420"/>
        <label>3</label>
    </ligand>
</feature>
<feature type="binding site" evidence="2">
    <location>
        <position position="532"/>
    </location>
    <ligand>
        <name>Mg(2+)</name>
        <dbReference type="ChEBI" id="CHEBI:18420"/>
        <label>3</label>
    </ligand>
</feature>
<feature type="binding site" evidence="2">
    <location>
        <position position="536"/>
    </location>
    <ligand>
        <name>Mg(2+)</name>
        <dbReference type="ChEBI" id="CHEBI:18420"/>
        <label>3</label>
    </ligand>
</feature>
<dbReference type="EC" id="4.2.3.15" evidence="4"/>
<dbReference type="EMBL" id="MK801765">
    <property type="protein sequence ID" value="QCY41293.1"/>
    <property type="molecule type" value="mRNA"/>
</dbReference>
<dbReference type="SMR" id="A0A4Y5QWK5"/>
<dbReference type="UniPathway" id="UPA00213"/>
<dbReference type="Proteomes" id="UP000596661">
    <property type="component" value="Unplaced"/>
</dbReference>
<dbReference type="GO" id="GO:0009507">
    <property type="term" value="C:chloroplast"/>
    <property type="evidence" value="ECO:0007669"/>
    <property type="project" value="UniProtKB-SubCell"/>
</dbReference>
<dbReference type="GO" id="GO:0000287">
    <property type="term" value="F:magnesium ion binding"/>
    <property type="evidence" value="ECO:0007669"/>
    <property type="project" value="InterPro"/>
</dbReference>
<dbReference type="GO" id="GO:0010333">
    <property type="term" value="F:terpene synthase activity"/>
    <property type="evidence" value="ECO:0007669"/>
    <property type="project" value="InterPro"/>
</dbReference>
<dbReference type="GO" id="GO:0016102">
    <property type="term" value="P:diterpenoid biosynthetic process"/>
    <property type="evidence" value="ECO:0007669"/>
    <property type="project" value="InterPro"/>
</dbReference>
<dbReference type="CDD" id="cd00684">
    <property type="entry name" value="Terpene_cyclase_plant_C1"/>
    <property type="match status" value="1"/>
</dbReference>
<dbReference type="FunFam" id="1.10.600.10:FF:000007">
    <property type="entry name" value="Isoprene synthase, chloroplastic"/>
    <property type="match status" value="1"/>
</dbReference>
<dbReference type="FunFam" id="1.50.10.130:FF:000001">
    <property type="entry name" value="Isoprene synthase, chloroplastic"/>
    <property type="match status" value="1"/>
</dbReference>
<dbReference type="Gene3D" id="1.10.600.10">
    <property type="entry name" value="Farnesyl Diphosphate Synthase"/>
    <property type="match status" value="1"/>
</dbReference>
<dbReference type="Gene3D" id="1.50.10.130">
    <property type="entry name" value="Terpene synthase, N-terminal domain"/>
    <property type="match status" value="1"/>
</dbReference>
<dbReference type="InterPro" id="IPR008949">
    <property type="entry name" value="Isoprenoid_synthase_dom_sf"/>
</dbReference>
<dbReference type="InterPro" id="IPR034741">
    <property type="entry name" value="Terpene_cyclase-like_1_C"/>
</dbReference>
<dbReference type="InterPro" id="IPR044814">
    <property type="entry name" value="Terpene_cyclase_plant_C1"/>
</dbReference>
<dbReference type="InterPro" id="IPR001906">
    <property type="entry name" value="Terpene_synth_N"/>
</dbReference>
<dbReference type="InterPro" id="IPR036965">
    <property type="entry name" value="Terpene_synth_N_sf"/>
</dbReference>
<dbReference type="InterPro" id="IPR050148">
    <property type="entry name" value="Terpene_synthase-like"/>
</dbReference>
<dbReference type="InterPro" id="IPR005630">
    <property type="entry name" value="Terpene_synthase_metal-bd"/>
</dbReference>
<dbReference type="InterPro" id="IPR008930">
    <property type="entry name" value="Terpenoid_cyclase/PrenylTrfase"/>
</dbReference>
<dbReference type="PANTHER" id="PTHR31225">
    <property type="entry name" value="OS04G0344100 PROTEIN-RELATED"/>
    <property type="match status" value="1"/>
</dbReference>
<dbReference type="PANTHER" id="PTHR31225:SF9">
    <property type="entry name" value="TERPENE SYNTHASE 10"/>
    <property type="match status" value="1"/>
</dbReference>
<dbReference type="Pfam" id="PF01397">
    <property type="entry name" value="Terpene_synth"/>
    <property type="match status" value="1"/>
</dbReference>
<dbReference type="Pfam" id="PF03936">
    <property type="entry name" value="Terpene_synth_C"/>
    <property type="match status" value="1"/>
</dbReference>
<dbReference type="SFLD" id="SFLDS00005">
    <property type="entry name" value="Isoprenoid_Synthase_Type_I"/>
    <property type="match status" value="1"/>
</dbReference>
<dbReference type="SFLD" id="SFLDG01019">
    <property type="entry name" value="Terpene_Cyclase_Like_1_C_Termi"/>
    <property type="match status" value="1"/>
</dbReference>
<dbReference type="SUPFAM" id="SSF48239">
    <property type="entry name" value="Terpenoid cyclases/Protein prenyltransferases"/>
    <property type="match status" value="1"/>
</dbReference>
<dbReference type="SUPFAM" id="SSF48576">
    <property type="entry name" value="Terpenoid synthases"/>
    <property type="match status" value="1"/>
</dbReference>
<sequence length="633" mass="74194">MHCMAVHQFSPSIVSSLPTISTYNNNHFCRFFTPKTSISPISKTKSKSSTCYPIQCTVVNNSSPSSTIVRRSANYEPPIWSFDYIQSLSTQYKGESYTRQLNKLKKEVTRMLLGLEINSLALLELIDTLQRLGISYHFKNEINTILKKKYTDNYINNNNIITNPNYNNLYAIALEFRLLRQHGYTVPQEIFNAFKDKRGKFKTCLSDDIMGVLCLYEASFYAMKHENILEETRIFSTKCLKKYMEKMENEEEKKILLLDDNNINSNLLLINHAFELPLHWRITRSEARWFIDEIYEKKQDMNSTLFEFAKLDFNIVQSTHQEDLQHLSRWWRDCKLGGKLNFARDRLMEAFLWDVGLKFEGEFSYFRRINARLFVLITIIDDIYDVYGTLEELELFTSAVERWDVKLINELPDYMKMPFFVLHNTINEMGFDVLVQQNFVNIEYLKKSWVDLCKCYLQEAKWYYSGYQPTLEEYTELGWLSIGASVILMHAYFCLTNPITKQDLKSLQLQHHYPNIIKQACLITRLADDLGTSSDELNRGDVPKSIQCYMYDNNATEDEAREHIKFLISETWKDMNKKDEDESCLSENFVEVCKNMARTALFIYENGDGHGSQNSLSKERISTLIITPINIPK</sequence>
<evidence type="ECO:0000250" key="1">
    <source>
        <dbReference type="UniProtKB" id="A0A1C9J6A7"/>
    </source>
</evidence>
<evidence type="ECO:0000250" key="2">
    <source>
        <dbReference type="UniProtKB" id="Q40577"/>
    </source>
</evidence>
<evidence type="ECO:0000255" key="3"/>
<evidence type="ECO:0000269" key="4">
    <source>
    </source>
</evidence>
<evidence type="ECO:0000303" key="5">
    <source>
    </source>
</evidence>
<evidence type="ECO:0000305" key="6"/>